<organism>
    <name type="scientific">Capsicum annuum</name>
    <name type="common">Capsicum pepper</name>
    <dbReference type="NCBI Taxonomy" id="4072"/>
    <lineage>
        <taxon>Eukaryota</taxon>
        <taxon>Viridiplantae</taxon>
        <taxon>Streptophyta</taxon>
        <taxon>Embryophyta</taxon>
        <taxon>Tracheophyta</taxon>
        <taxon>Spermatophyta</taxon>
        <taxon>Magnoliopsida</taxon>
        <taxon>eudicotyledons</taxon>
        <taxon>Gunneridae</taxon>
        <taxon>Pentapetalae</taxon>
        <taxon>asterids</taxon>
        <taxon>lamiids</taxon>
        <taxon>Solanales</taxon>
        <taxon>Solanaceae</taxon>
        <taxon>Solanoideae</taxon>
        <taxon>Capsiceae</taxon>
        <taxon>Capsicum</taxon>
    </lineage>
</organism>
<protein>
    <recommendedName>
        <fullName>Acid beta-fructofuranosidase AIV-18</fullName>
        <ecNumber>3.2.1.26</ecNumber>
    </recommendedName>
    <alternativeName>
        <fullName>Acid invertase</fullName>
    </alternativeName>
    <alternativeName>
        <fullName>Acid sucrose hydrolase</fullName>
    </alternativeName>
</protein>
<name>INV1_CAPAN</name>
<reference key="1">
    <citation type="journal article" date="1997" name="J. Plant Biol.">
        <title>Isolation and characterization of acid invertase cDNA clone in Hot pepper (Capsicum annuum L.) fruits.</title>
        <authorList>
            <person name="Choi D."/>
            <person name="Lee K.-W."/>
            <person name="Kim S."/>
        </authorList>
    </citation>
    <scope>NUCLEOTIDE SEQUENCE [MRNA]</scope>
    <source>
        <tissue>Fruit</tissue>
    </source>
</reference>
<accession>P93761</accession>
<evidence type="ECO:0000250" key="1">
    <source>
        <dbReference type="UniProtKB" id="P29001"/>
    </source>
</evidence>
<evidence type="ECO:0000250" key="2">
    <source>
        <dbReference type="UniProtKB" id="P80065"/>
    </source>
</evidence>
<evidence type="ECO:0000250" key="3">
    <source>
        <dbReference type="UniProtKB" id="Q39041"/>
    </source>
</evidence>
<evidence type="ECO:0000250" key="4">
    <source>
        <dbReference type="UniProtKB" id="Q43866"/>
    </source>
</evidence>
<evidence type="ECO:0000255" key="5"/>
<evidence type="ECO:0000255" key="6">
    <source>
        <dbReference type="PROSITE-ProRule" id="PRU10067"/>
    </source>
</evidence>
<evidence type="ECO:0000256" key="7">
    <source>
        <dbReference type="SAM" id="MobiDB-lite"/>
    </source>
</evidence>
<evidence type="ECO:0000305" key="8"/>
<sequence length="640" mass="70621">MAIHPSSYDPETSTTHYTFLPGQPDSGHRKSIKVVSVILLSSFFLLYLAAFVILNNQPPNLQNKSPSASETLTPATPSRGVSQGVSEKTFKDVSGTSQVSYTWSNAMLNWQRTAYHFQPQKNWMNDPNGPLYHKGWYHLFYQYNPDSAIWGNITWGHAVSTDLIHWLYLPFAMVPDQWYDINGVWTGSATILPDGLIMMLYTGDTDDYVQVQNLAYPANLSDPLLLDWVKYQGNPVLVPPPGIGVKDFRDPTTAWTGPQNGQWLLTIGSKVGKTGIALVYETSNFKLLDGVLHAVPGTGMWECVDFYPVSTLDANGLDTSYNGPGIKHVLKASLDDNKQDHYVIGTYDPVKNKFSPDNPDLDCGIGLRLDYGRYYASKTFYDPKKQRRVLWGWIGETDSESADLQKGWASVQSIPRTVLFDKKTGTHLLQWPVAEIESLRSGDPKVKEVNLQPGSIELLHVDSAAQFDIEASFEVDRVTLEGIIEADVGYNCSTSGGAASRGILGPFGVVVIADQTLSELTPVYFYISRGADGRAEAHFCADQTRSSEAPGVAKQVYGSSVPVLDGEKHRMRLLVDHSIVESFAQGGRTVITSRIYPTKAVNGAARLFVFNNATGAIVTASLKIWSLESADIRSFPLQKL</sequence>
<proteinExistence type="evidence at transcript level"/>
<keyword id="KW-1015">Disulfide bond</keyword>
<keyword id="KW-0325">Glycoprotein</keyword>
<keyword id="KW-0326">Glycosidase</keyword>
<keyword id="KW-0378">Hydrolase</keyword>
<keyword id="KW-0472">Membrane</keyword>
<keyword id="KW-0735">Signal-anchor</keyword>
<keyword id="KW-0812">Transmembrane</keyword>
<keyword id="KW-1133">Transmembrane helix</keyword>
<keyword id="KW-0926">Vacuole</keyword>
<feature type="chain" id="PRO_0000169866" description="Acid beta-fructofuranosidase AIV-18">
    <location>
        <begin position="1"/>
        <end position="640"/>
    </location>
</feature>
<feature type="propeptide" id="PRO_0000438788" description="Removed in mature form" evidence="2">
    <location>
        <begin position="1"/>
        <end position="99"/>
    </location>
</feature>
<feature type="topological domain" description="Cytoplasmic" evidence="8">
    <location>
        <begin position="1"/>
        <end position="33"/>
    </location>
</feature>
<feature type="transmembrane region" description="Helical; Signal-anchor for type II membrane protein" evidence="5">
    <location>
        <begin position="34"/>
        <end position="54"/>
    </location>
</feature>
<feature type="topological domain" description="Lumenal" evidence="8">
    <location>
        <begin position="55"/>
        <end position="640"/>
    </location>
</feature>
<feature type="region of interest" description="Disordered" evidence="7">
    <location>
        <begin position="1"/>
        <end position="22"/>
    </location>
</feature>
<feature type="region of interest" description="Disordered" evidence="7">
    <location>
        <begin position="62"/>
        <end position="89"/>
    </location>
</feature>
<feature type="compositionally biased region" description="Polar residues" evidence="7">
    <location>
        <begin position="62"/>
        <end position="86"/>
    </location>
</feature>
<feature type="active site" evidence="6">
    <location>
        <position position="126"/>
    </location>
</feature>
<feature type="binding site" evidence="4">
    <location>
        <begin position="123"/>
        <end position="126"/>
    </location>
    <ligand>
        <name>substrate</name>
    </ligand>
</feature>
<feature type="binding site" evidence="4">
    <location>
        <position position="142"/>
    </location>
    <ligand>
        <name>substrate</name>
    </ligand>
</feature>
<feature type="binding site" evidence="4">
    <location>
        <position position="150"/>
    </location>
    <ligand>
        <name>substrate</name>
    </ligand>
</feature>
<feature type="binding site" evidence="4">
    <location>
        <begin position="185"/>
        <end position="186"/>
    </location>
    <ligand>
        <name>substrate</name>
    </ligand>
</feature>
<feature type="binding site" evidence="4">
    <location>
        <begin position="249"/>
        <end position="250"/>
    </location>
    <ligand>
        <name>substrate</name>
    </ligand>
</feature>
<feature type="binding site" evidence="4">
    <location>
        <position position="302"/>
    </location>
    <ligand>
        <name>substrate</name>
    </ligand>
</feature>
<feature type="binding site" evidence="4">
    <location>
        <position position="335"/>
    </location>
    <ligand>
        <name>substrate</name>
    </ligand>
</feature>
<feature type="glycosylation site" description="N-linked (GlcNAc...) asparagine" evidence="5">
    <location>
        <position position="152"/>
    </location>
</feature>
<feature type="glycosylation site" description="N-linked (GlcNAc...) asparagine" evidence="5">
    <location>
        <position position="219"/>
    </location>
</feature>
<feature type="glycosylation site" description="N-linked (GlcNAc...) asparagine" evidence="5">
    <location>
        <position position="491"/>
    </location>
</feature>
<feature type="glycosylation site" description="N-linked (GlcNAc...) asparagine" evidence="5">
    <location>
        <position position="612"/>
    </location>
</feature>
<feature type="disulfide bond" evidence="4">
    <location>
        <begin position="492"/>
        <end position="540"/>
    </location>
</feature>
<dbReference type="EC" id="3.2.1.26"/>
<dbReference type="EMBL" id="U87849">
    <property type="protein sequence ID" value="AAB48484.1"/>
    <property type="molecule type" value="mRNA"/>
</dbReference>
<dbReference type="PIR" id="T09534">
    <property type="entry name" value="T09534"/>
</dbReference>
<dbReference type="RefSeq" id="NP_001311791.1">
    <property type="nucleotide sequence ID" value="NM_001324862.1"/>
</dbReference>
<dbReference type="SMR" id="P93761"/>
<dbReference type="CAZy" id="GH32">
    <property type="family name" value="Glycoside Hydrolase Family 32"/>
</dbReference>
<dbReference type="GeneID" id="107863437"/>
<dbReference type="KEGG" id="cann:107863437"/>
<dbReference type="OrthoDB" id="202537at2759"/>
<dbReference type="UniPathway" id="UPA00238"/>
<dbReference type="GO" id="GO:0016020">
    <property type="term" value="C:membrane"/>
    <property type="evidence" value="ECO:0007669"/>
    <property type="project" value="UniProtKB-SubCell"/>
</dbReference>
<dbReference type="GO" id="GO:0005775">
    <property type="term" value="C:vacuolar lumen"/>
    <property type="evidence" value="ECO:0007669"/>
    <property type="project" value="UniProtKB-SubCell"/>
</dbReference>
<dbReference type="GO" id="GO:0004564">
    <property type="term" value="F:beta-fructofuranosidase activity"/>
    <property type="evidence" value="ECO:0007669"/>
    <property type="project" value="UniProtKB-EC"/>
</dbReference>
<dbReference type="GO" id="GO:0005985">
    <property type="term" value="P:sucrose metabolic process"/>
    <property type="evidence" value="ECO:0007669"/>
    <property type="project" value="UniProtKB-UniPathway"/>
</dbReference>
<dbReference type="CDD" id="cd18624">
    <property type="entry name" value="GH32_Fruct1-like"/>
    <property type="match status" value="1"/>
</dbReference>
<dbReference type="FunFam" id="2.115.10.20:FF:000001">
    <property type="entry name" value="Beta-fructofuranosidase, insoluble isoenzyme CWINV1"/>
    <property type="match status" value="1"/>
</dbReference>
<dbReference type="FunFam" id="2.60.120.560:FF:000002">
    <property type="entry name" value="Beta-fructofuranosidase, insoluble isoenzyme CWINV1"/>
    <property type="match status" value="1"/>
</dbReference>
<dbReference type="Gene3D" id="2.60.120.560">
    <property type="entry name" value="Exo-inulinase, domain 1"/>
    <property type="match status" value="1"/>
</dbReference>
<dbReference type="Gene3D" id="2.115.10.20">
    <property type="entry name" value="Glycosyl hydrolase domain, family 43"/>
    <property type="match status" value="1"/>
</dbReference>
<dbReference type="InterPro" id="IPR021792">
    <property type="entry name" value="Beta-fructofuranosidase_N"/>
</dbReference>
<dbReference type="InterPro" id="IPR013320">
    <property type="entry name" value="ConA-like_dom_sf"/>
</dbReference>
<dbReference type="InterPro" id="IPR050551">
    <property type="entry name" value="Fructan_Metab_Enzymes"/>
</dbReference>
<dbReference type="InterPro" id="IPR001362">
    <property type="entry name" value="Glyco_hydro_32"/>
</dbReference>
<dbReference type="InterPro" id="IPR018053">
    <property type="entry name" value="Glyco_hydro_32_AS"/>
</dbReference>
<dbReference type="InterPro" id="IPR013189">
    <property type="entry name" value="Glyco_hydro_32_C"/>
</dbReference>
<dbReference type="InterPro" id="IPR013148">
    <property type="entry name" value="Glyco_hydro_32_N"/>
</dbReference>
<dbReference type="InterPro" id="IPR023296">
    <property type="entry name" value="Glyco_hydro_beta-prop_sf"/>
</dbReference>
<dbReference type="PANTHER" id="PTHR31953">
    <property type="entry name" value="BETA-FRUCTOFURANOSIDASE, INSOLUBLE ISOENZYME CWINV1-RELATED"/>
    <property type="match status" value="1"/>
</dbReference>
<dbReference type="Pfam" id="PF08244">
    <property type="entry name" value="Glyco_hydro_32C"/>
    <property type="match status" value="1"/>
</dbReference>
<dbReference type="Pfam" id="PF00251">
    <property type="entry name" value="Glyco_hydro_32N"/>
    <property type="match status" value="1"/>
</dbReference>
<dbReference type="Pfam" id="PF11837">
    <property type="entry name" value="INV_N"/>
    <property type="match status" value="1"/>
</dbReference>
<dbReference type="SMART" id="SM00640">
    <property type="entry name" value="Glyco_32"/>
    <property type="match status" value="1"/>
</dbReference>
<dbReference type="SUPFAM" id="SSF75005">
    <property type="entry name" value="Arabinanase/levansucrase/invertase"/>
    <property type="match status" value="1"/>
</dbReference>
<dbReference type="SUPFAM" id="SSF49899">
    <property type="entry name" value="Concanavalin A-like lectins/glucanases"/>
    <property type="match status" value="1"/>
</dbReference>
<dbReference type="PROSITE" id="PS00609">
    <property type="entry name" value="GLYCOSYL_HYDROL_F32"/>
    <property type="match status" value="1"/>
</dbReference>
<comment type="catalytic activity">
    <reaction evidence="6">
        <text>Hydrolysis of terminal non-reducing beta-D-fructofuranoside residues in beta-D-fructofuranosides.</text>
        <dbReference type="EC" id="3.2.1.26"/>
    </reaction>
</comment>
<comment type="pathway">
    <text evidence="8">Glycan biosynthesis; sucrose metabolism.</text>
</comment>
<comment type="subunit">
    <text evidence="1">May be present in two forms, a 70 kDa monomer and a heterodimer of the 30 kDa and 38 kDa subunits. The ratio of the levels of the two forms within cells appears to be regulated developmentally (By similarity).</text>
</comment>
<comment type="subcellular location">
    <subcellularLocation>
        <location evidence="5">Membrane</location>
        <topology evidence="5">Single-pass type II membrane protein</topology>
    </subcellularLocation>
    <subcellularLocation>
        <location evidence="3">Vacuole lumen</location>
    </subcellularLocation>
    <text evidence="3">May be released into the lumen of the vacuole from the tonoplast through a proteolytic processing.</text>
</comment>
<comment type="similarity">
    <text evidence="8">Belongs to the glycosyl hydrolase 32 family.</text>
</comment>